<gene>
    <name type="primary">mutL</name>
    <name type="ordered locus">TC_0864</name>
</gene>
<proteinExistence type="inferred from homology"/>
<keyword id="KW-0227">DNA damage</keyword>
<keyword id="KW-0234">DNA repair</keyword>
<reference key="1">
    <citation type="journal article" date="2000" name="Nucleic Acids Res.">
        <title>Genome sequences of Chlamydia trachomatis MoPn and Chlamydia pneumoniae AR39.</title>
        <authorList>
            <person name="Read T.D."/>
            <person name="Brunham R.C."/>
            <person name="Shen C."/>
            <person name="Gill S.R."/>
            <person name="Heidelberg J.F."/>
            <person name="White O."/>
            <person name="Hickey E.K."/>
            <person name="Peterson J.D."/>
            <person name="Utterback T.R."/>
            <person name="Berry K.J."/>
            <person name="Bass S."/>
            <person name="Linher K.D."/>
            <person name="Weidman J.F."/>
            <person name="Khouri H.M."/>
            <person name="Craven B."/>
            <person name="Bowman C."/>
            <person name="Dodson R.J."/>
            <person name="Gwinn M.L."/>
            <person name="Nelson W.C."/>
            <person name="DeBoy R.T."/>
            <person name="Kolonay J.F."/>
            <person name="McClarty G."/>
            <person name="Salzberg S.L."/>
            <person name="Eisen J.A."/>
            <person name="Fraser C.M."/>
        </authorList>
    </citation>
    <scope>NUCLEOTIDE SEQUENCE [LARGE SCALE GENOMIC DNA]</scope>
    <source>
        <strain>MoPn / Nigg</strain>
    </source>
</reference>
<protein>
    <recommendedName>
        <fullName>DNA mismatch repair protein MutL</fullName>
    </recommendedName>
</protein>
<evidence type="ECO:0000250" key="1"/>
<evidence type="ECO:0000305" key="2"/>
<dbReference type="EMBL" id="AE002160">
    <property type="protein sequence ID" value="AAF39660.1"/>
    <property type="molecule type" value="Genomic_DNA"/>
</dbReference>
<dbReference type="PIR" id="G81657">
    <property type="entry name" value="G81657"/>
</dbReference>
<dbReference type="RefSeq" id="WP_010231782.1">
    <property type="nucleotide sequence ID" value="NZ_CP027217.1"/>
</dbReference>
<dbReference type="SMR" id="Q9PJG5"/>
<dbReference type="GeneID" id="1246232"/>
<dbReference type="KEGG" id="cmu:TC_0864"/>
<dbReference type="eggNOG" id="COG0323">
    <property type="taxonomic scope" value="Bacteria"/>
</dbReference>
<dbReference type="HOGENOM" id="CLU_004131_4_3_0"/>
<dbReference type="OrthoDB" id="9763467at2"/>
<dbReference type="Proteomes" id="UP000000800">
    <property type="component" value="Chromosome"/>
</dbReference>
<dbReference type="GO" id="GO:0032300">
    <property type="term" value="C:mismatch repair complex"/>
    <property type="evidence" value="ECO:0007669"/>
    <property type="project" value="InterPro"/>
</dbReference>
<dbReference type="GO" id="GO:0005524">
    <property type="term" value="F:ATP binding"/>
    <property type="evidence" value="ECO:0007669"/>
    <property type="project" value="InterPro"/>
</dbReference>
<dbReference type="GO" id="GO:0016887">
    <property type="term" value="F:ATP hydrolysis activity"/>
    <property type="evidence" value="ECO:0007669"/>
    <property type="project" value="InterPro"/>
</dbReference>
<dbReference type="GO" id="GO:0140664">
    <property type="term" value="F:ATP-dependent DNA damage sensor activity"/>
    <property type="evidence" value="ECO:0007669"/>
    <property type="project" value="InterPro"/>
</dbReference>
<dbReference type="GO" id="GO:0030983">
    <property type="term" value="F:mismatched DNA binding"/>
    <property type="evidence" value="ECO:0007669"/>
    <property type="project" value="InterPro"/>
</dbReference>
<dbReference type="GO" id="GO:0006298">
    <property type="term" value="P:mismatch repair"/>
    <property type="evidence" value="ECO:0007669"/>
    <property type="project" value="UniProtKB-UniRule"/>
</dbReference>
<dbReference type="CDD" id="cd16926">
    <property type="entry name" value="HATPase_MutL-MLH-PMS-like"/>
    <property type="match status" value="1"/>
</dbReference>
<dbReference type="CDD" id="cd00782">
    <property type="entry name" value="MutL_Trans"/>
    <property type="match status" value="1"/>
</dbReference>
<dbReference type="FunFam" id="3.30.565.10:FF:000003">
    <property type="entry name" value="DNA mismatch repair endonuclease MutL"/>
    <property type="match status" value="1"/>
</dbReference>
<dbReference type="Gene3D" id="3.30.230.10">
    <property type="match status" value="1"/>
</dbReference>
<dbReference type="Gene3D" id="3.30.565.10">
    <property type="entry name" value="Histidine kinase-like ATPase, C-terminal domain"/>
    <property type="match status" value="1"/>
</dbReference>
<dbReference type="Gene3D" id="3.30.1370.100">
    <property type="entry name" value="MutL, C-terminal domain, regulatory subdomain"/>
    <property type="match status" value="1"/>
</dbReference>
<dbReference type="HAMAP" id="MF_00149">
    <property type="entry name" value="DNA_mis_repair"/>
    <property type="match status" value="1"/>
</dbReference>
<dbReference type="InterPro" id="IPR014762">
    <property type="entry name" value="DNA_mismatch_repair_CS"/>
</dbReference>
<dbReference type="InterPro" id="IPR020667">
    <property type="entry name" value="DNA_mismatch_repair_MutL"/>
</dbReference>
<dbReference type="InterPro" id="IPR013507">
    <property type="entry name" value="DNA_mismatch_S5_2-like"/>
</dbReference>
<dbReference type="InterPro" id="IPR036890">
    <property type="entry name" value="HATPase_C_sf"/>
</dbReference>
<dbReference type="InterPro" id="IPR002099">
    <property type="entry name" value="MutL/Mlh/PMS"/>
</dbReference>
<dbReference type="InterPro" id="IPR038973">
    <property type="entry name" value="MutL/Mlh/Pms-like"/>
</dbReference>
<dbReference type="InterPro" id="IPR014790">
    <property type="entry name" value="MutL_C"/>
</dbReference>
<dbReference type="InterPro" id="IPR042121">
    <property type="entry name" value="MutL_C_regsub"/>
</dbReference>
<dbReference type="InterPro" id="IPR037198">
    <property type="entry name" value="MutL_C_sf"/>
</dbReference>
<dbReference type="InterPro" id="IPR020568">
    <property type="entry name" value="Ribosomal_Su5_D2-typ_SF"/>
</dbReference>
<dbReference type="InterPro" id="IPR014721">
    <property type="entry name" value="Ribsml_uS5_D2-typ_fold_subgr"/>
</dbReference>
<dbReference type="NCBIfam" id="TIGR00585">
    <property type="entry name" value="mutl"/>
    <property type="match status" value="1"/>
</dbReference>
<dbReference type="NCBIfam" id="NF000954">
    <property type="entry name" value="PRK00095.2-5"/>
    <property type="match status" value="1"/>
</dbReference>
<dbReference type="PANTHER" id="PTHR10073">
    <property type="entry name" value="DNA MISMATCH REPAIR PROTEIN MLH, PMS, MUTL"/>
    <property type="match status" value="1"/>
</dbReference>
<dbReference type="PANTHER" id="PTHR10073:SF12">
    <property type="entry name" value="DNA MISMATCH REPAIR PROTEIN MLH1"/>
    <property type="match status" value="1"/>
</dbReference>
<dbReference type="Pfam" id="PF01119">
    <property type="entry name" value="DNA_mis_repair"/>
    <property type="match status" value="1"/>
</dbReference>
<dbReference type="Pfam" id="PF13589">
    <property type="entry name" value="HATPase_c_3"/>
    <property type="match status" value="1"/>
</dbReference>
<dbReference type="Pfam" id="PF08676">
    <property type="entry name" value="MutL_C"/>
    <property type="match status" value="1"/>
</dbReference>
<dbReference type="SMART" id="SM01340">
    <property type="entry name" value="DNA_mis_repair"/>
    <property type="match status" value="1"/>
</dbReference>
<dbReference type="SMART" id="SM00853">
    <property type="entry name" value="MutL_C"/>
    <property type="match status" value="1"/>
</dbReference>
<dbReference type="SUPFAM" id="SSF55874">
    <property type="entry name" value="ATPase domain of HSP90 chaperone/DNA topoisomerase II/histidine kinase"/>
    <property type="match status" value="1"/>
</dbReference>
<dbReference type="SUPFAM" id="SSF118116">
    <property type="entry name" value="DNA mismatch repair protein MutL"/>
    <property type="match status" value="1"/>
</dbReference>
<dbReference type="SUPFAM" id="SSF54211">
    <property type="entry name" value="Ribosomal protein S5 domain 2-like"/>
    <property type="match status" value="1"/>
</dbReference>
<dbReference type="PROSITE" id="PS00058">
    <property type="entry name" value="DNA_MISMATCH_REPAIR_1"/>
    <property type="match status" value="1"/>
</dbReference>
<feature type="chain" id="PRO_0000177936" description="DNA mismatch repair protein MutL">
    <location>
        <begin position="1"/>
        <end position="576"/>
    </location>
</feature>
<comment type="function">
    <text evidence="1">This protein is involved in the repair of mismatches in DNA. It is required for dam-dependent methyl-directed DNA mismatch repair. May act as a 'molecular matchmaker', a protein that promotes the formation of a stable complex between two or more DNA-binding proteins in an ATP-dependent manner without itself being part of a final effector complex (By similarity).</text>
</comment>
<comment type="similarity">
    <text evidence="2">Belongs to the DNA mismatch repair MutL/HexB family.</text>
</comment>
<accession>Q9PJG5</accession>
<sequence length="576" mass="64145">MSLSSSRIRLLDSATVNQIAAGEVIENAASVVKELIENALDAGADEISIETLGGGKGQIVVRDNGIGMDADEVAVAIQRHATSKISHFADIFSLASFGFRGEALPAIASISKMEIHTAKVNGLGSKTLIEKGEPVCCEACPRQPGTTISVNSLFYNVPMRQSFQKSPQMDRLAIRRLLENSILSTEGIKWTWISERRQELNIAKNQGFTERVALVMGEAFVNEAFLIDKRQNELHLTGFLGSPSMHRSTRQGQRLFINNRAVESSFISRKVAEAYAWMLPAQRYPAFVLKLSVPPMWCDFNVHPQKTEVRLLQEGQIGALLVEAISEVLLHRSPSLEEKMVEPTMESPLIENGGLEIPSIRPVAISTPLSCPNFLQQSFVETEANRALCKEQENLALPIIERVRFLASLGKVILVEDSEGVHALFVQAARKHLFYISLLSKRSDSLLACQMFLVPPTVQMTKLEADFLQTRLESLAAQGIELCRISPDSFAIESAPPFIQEEELKEWIISLAHEGAFQVNESFEQLVENTVQKLAFSKNTRAFDHSWINVLWQIGKPEKAFDGETIRRLVLEEDFM</sequence>
<organism>
    <name type="scientific">Chlamydia muridarum (strain MoPn / Nigg)</name>
    <dbReference type="NCBI Taxonomy" id="243161"/>
    <lineage>
        <taxon>Bacteria</taxon>
        <taxon>Pseudomonadati</taxon>
        <taxon>Chlamydiota</taxon>
        <taxon>Chlamydiia</taxon>
        <taxon>Chlamydiales</taxon>
        <taxon>Chlamydiaceae</taxon>
        <taxon>Chlamydia/Chlamydophila group</taxon>
        <taxon>Chlamydia</taxon>
    </lineage>
</organism>
<name>MUTL_CHLMU</name>